<feature type="chain" id="PRO_0000080766" description="Phosphatidylinositol 3-kinase regulatory subunit gamma">
    <location>
        <begin position="1"/>
        <end position="461"/>
    </location>
</feature>
<feature type="domain" description="SH2 1" evidence="3">
    <location>
        <begin position="65"/>
        <end position="160"/>
    </location>
</feature>
<feature type="domain" description="SH2 2" evidence="3">
    <location>
        <begin position="358"/>
        <end position="452"/>
    </location>
</feature>
<feature type="modified residue" description="Phosphotyrosine" evidence="2">
    <location>
        <position position="341"/>
    </location>
</feature>
<proteinExistence type="evidence at transcript level"/>
<comment type="function">
    <text>Binds to activated (phosphorylated) protein-tyrosine kinases through its SH2 domain and regulates their kinase activity. During insulin stimulation, it also binds to IRS-1.</text>
</comment>
<comment type="subunit">
    <text evidence="1">Heterodimer of a regulatory subunit PIK3R3 and a p110 catalytic subunit (PIK3CA, PIK3CB or PIK3CD). Interacts with AXL (By similarity).</text>
</comment>
<comment type="tissue specificity">
    <text>Highest levels in brain and testis. Lower levels in adipose tissue, kidney, heart, lung and skeletal muscle. Barely detectable in liver and spleen.</text>
</comment>
<comment type="similarity">
    <text evidence="4">Belongs to the PI3K p85 subunit family.</text>
</comment>
<organism>
    <name type="scientific">Bos taurus</name>
    <name type="common">Bovine</name>
    <dbReference type="NCBI Taxonomy" id="9913"/>
    <lineage>
        <taxon>Eukaryota</taxon>
        <taxon>Metazoa</taxon>
        <taxon>Chordata</taxon>
        <taxon>Craniata</taxon>
        <taxon>Vertebrata</taxon>
        <taxon>Euteleostomi</taxon>
        <taxon>Mammalia</taxon>
        <taxon>Eutheria</taxon>
        <taxon>Laurasiatheria</taxon>
        <taxon>Artiodactyla</taxon>
        <taxon>Ruminantia</taxon>
        <taxon>Pecora</taxon>
        <taxon>Bovidae</taxon>
        <taxon>Bovinae</taxon>
        <taxon>Bos</taxon>
    </lineage>
</organism>
<gene>
    <name type="primary">PIK3R3</name>
</gene>
<accession>O46404</accession>
<protein>
    <recommendedName>
        <fullName>Phosphatidylinositol 3-kinase regulatory subunit gamma</fullName>
        <shortName>PI3-kinase regulatory subunit gamma</shortName>
        <shortName>PI3K regulatory subunit gamma</shortName>
        <shortName>PtdIns-3-kinase regulatory subunit gamma</shortName>
    </recommendedName>
    <alternativeName>
        <fullName>Phosphatidylinositol 3-kinase 85 kDa regulatory subunit gamma</fullName>
        <shortName>PI3-kinase subunit p85-gamma</shortName>
        <shortName>PtdIns-3-kinase regulatory subunit p85-gamma</shortName>
    </alternativeName>
    <alternativeName>
        <fullName>p55PIK</fullName>
    </alternativeName>
</protein>
<reference key="1">
    <citation type="submission" date="1997-11" db="EMBL/GenBank/DDBJ databases">
        <title>p55gamma, a regulatory subunit of PI 3-kinase from adrenal cortex.</title>
        <authorList>
            <person name="Varnai P."/>
            <person name="Balla T."/>
        </authorList>
    </citation>
    <scope>NUCLEOTIDE SEQUENCE [MRNA]</scope>
    <source>
        <tissue>Adrenal cortex</tissue>
    </source>
</reference>
<sequence>MYNTVWSIDRDDADWREVMMPYSTELIFYIEMDPPALPPKPPKPMTSAITNGIKDSSVSLQDAEWYWGDISREEVNDKLRDMPDGTFLVRDASTKMQGDYTLTLRKGGNNKLIKIYHRDGKYGFSDPLTFNSVVELISHYHHESLAQYNPKLDVKLMYPVSRYQQDQLVKEDNIDAVGKKLQEYHSQYQEKSKEYDRLYEEYTRTSQEIQMKRTAIEAFNETIKIFEEQCHTQEQHSKEYIERFRKEGNEKEIERIMMNYDKLKSRLGEIHDSKMRLEQDLKKQALDNREIDKKMNSIKPDLIRLRKIRDQHLVWLNHKGVRQKRLNAWLGIKNEDADETYFINEEDENLPHYDEKTWFVEDINRVQAEDLLYGKPDGAFLIRESSKKGCYACSVVADGEVKHCVIYSTARGYGFAEPYNLYGSLKELVLHYQRTSLVQHNDSLNVRLAYPVHAQMPTLCR</sequence>
<keyword id="KW-0597">Phosphoprotein</keyword>
<keyword id="KW-1185">Reference proteome</keyword>
<keyword id="KW-0677">Repeat</keyword>
<keyword id="KW-0727">SH2 domain</keyword>
<name>P55G_BOVIN</name>
<dbReference type="EMBL" id="AF036256">
    <property type="protein sequence ID" value="AAB88704.1"/>
    <property type="molecule type" value="mRNA"/>
</dbReference>
<dbReference type="RefSeq" id="NP_777221.1">
    <property type="nucleotide sequence ID" value="NM_174796.1"/>
</dbReference>
<dbReference type="SMR" id="O46404"/>
<dbReference type="FunCoup" id="O46404">
    <property type="interactions" value="1943"/>
</dbReference>
<dbReference type="STRING" id="9913.ENSBTAP00000003878"/>
<dbReference type="ChEMBL" id="CHEMBL4524045"/>
<dbReference type="PaxDb" id="9913-ENSBTAP00000003878"/>
<dbReference type="GeneID" id="286865"/>
<dbReference type="KEGG" id="bta:286865"/>
<dbReference type="CTD" id="8503"/>
<dbReference type="eggNOG" id="KOG4637">
    <property type="taxonomic scope" value="Eukaryota"/>
</dbReference>
<dbReference type="InParanoid" id="O46404"/>
<dbReference type="OrthoDB" id="3175255at2759"/>
<dbReference type="Proteomes" id="UP000009136">
    <property type="component" value="Unplaced"/>
</dbReference>
<dbReference type="GO" id="GO:0005943">
    <property type="term" value="C:phosphatidylinositol 3-kinase complex, class IA"/>
    <property type="evidence" value="ECO:0000318"/>
    <property type="project" value="GO_Central"/>
</dbReference>
<dbReference type="GO" id="GO:0046935">
    <property type="term" value="F:1-phosphatidylinositol-3-kinase regulator activity"/>
    <property type="evidence" value="ECO:0000318"/>
    <property type="project" value="GO_Central"/>
</dbReference>
<dbReference type="GO" id="GO:0008286">
    <property type="term" value="P:insulin receptor signaling pathway"/>
    <property type="evidence" value="ECO:0000318"/>
    <property type="project" value="GO_Central"/>
</dbReference>
<dbReference type="CDD" id="cd09930">
    <property type="entry name" value="SH2_cSH2_p85_like"/>
    <property type="match status" value="1"/>
</dbReference>
<dbReference type="CDD" id="cd09942">
    <property type="entry name" value="SH2_nSH2_p85_like"/>
    <property type="match status" value="1"/>
</dbReference>
<dbReference type="FunFam" id="3.30.505.10:FF:000006">
    <property type="entry name" value="Phosphatidylinositol 3-kinase regulatory subunit alpha"/>
    <property type="match status" value="1"/>
</dbReference>
<dbReference type="FunFam" id="3.30.505.10:FF:000017">
    <property type="entry name" value="Phosphatidylinositol 3-kinase regulatory subunit gamma b"/>
    <property type="match status" value="1"/>
</dbReference>
<dbReference type="FunFam" id="1.10.287.1490:FF:000001">
    <property type="entry name" value="Putative phosphatidylinositol 3-kinase regulatory subunit alpha"/>
    <property type="match status" value="1"/>
</dbReference>
<dbReference type="Gene3D" id="1.10.287.1490">
    <property type="match status" value="1"/>
</dbReference>
<dbReference type="Gene3D" id="3.30.505.10">
    <property type="entry name" value="SH2 domain"/>
    <property type="match status" value="2"/>
</dbReference>
<dbReference type="InterPro" id="IPR032498">
    <property type="entry name" value="PI3K_P85_iSH2"/>
</dbReference>
<dbReference type="InterPro" id="IPR035020">
    <property type="entry name" value="PI3kinase_P85_cSH2"/>
</dbReference>
<dbReference type="InterPro" id="IPR035022">
    <property type="entry name" value="PI3kinase_P85_nSH2"/>
</dbReference>
<dbReference type="InterPro" id="IPR000980">
    <property type="entry name" value="SH2"/>
</dbReference>
<dbReference type="InterPro" id="IPR036860">
    <property type="entry name" value="SH2_dom_sf"/>
</dbReference>
<dbReference type="PANTHER" id="PTHR10155">
    <property type="entry name" value="PHOSPHATIDYLINOSITOL 3-KINASE REGULATORY SUBUNIT"/>
    <property type="match status" value="1"/>
</dbReference>
<dbReference type="PANTHER" id="PTHR10155:SF1">
    <property type="entry name" value="PHOSPHATIDYLINOSITOL 3-KINASE REGULATORY SUBUNIT BETA"/>
    <property type="match status" value="1"/>
</dbReference>
<dbReference type="Pfam" id="PF16454">
    <property type="entry name" value="PI3K_P85_iSH2"/>
    <property type="match status" value="1"/>
</dbReference>
<dbReference type="Pfam" id="PF00017">
    <property type="entry name" value="SH2"/>
    <property type="match status" value="2"/>
</dbReference>
<dbReference type="PRINTS" id="PR00678">
    <property type="entry name" value="PI3KINASEP85"/>
</dbReference>
<dbReference type="PRINTS" id="PR00401">
    <property type="entry name" value="SH2DOMAIN"/>
</dbReference>
<dbReference type="SMART" id="SM00252">
    <property type="entry name" value="SH2"/>
    <property type="match status" value="2"/>
</dbReference>
<dbReference type="SUPFAM" id="SSF55550">
    <property type="entry name" value="SH2 domain"/>
    <property type="match status" value="2"/>
</dbReference>
<dbReference type="PROSITE" id="PS50001">
    <property type="entry name" value="SH2"/>
    <property type="match status" value="2"/>
</dbReference>
<evidence type="ECO:0000250" key="1"/>
<evidence type="ECO:0000250" key="2">
    <source>
        <dbReference type="UniProtKB" id="Q64143"/>
    </source>
</evidence>
<evidence type="ECO:0000255" key="3">
    <source>
        <dbReference type="PROSITE-ProRule" id="PRU00191"/>
    </source>
</evidence>
<evidence type="ECO:0000305" key="4"/>